<sequence length="527" mass="59166">MNGDLNSWDKFCNYLWFDKKLNIWLDISKINFTSKEINNLEDKFVDVFSSMKELENGAISNIDENRQVGHYWLRNPSISPSSKIAEEIRADINAISEFGKQILNGDIKNKNNKQYTDVLWIGIGGSGLGPLLITESLQKCSRGLNFSYIDNVDPFLISEKLEELSEKLSTTLFVVVSKSGGTPEPRIAMEIIKSHCEKNSLEWNSNAIAITMKDSKLFKKATSEYWLKIFNLQDWVGGRTSITSSVGLLPLALINENISEFIKGASLMDEATRISDFKNNPAALLSSAWYLTGDGTGKRDMVVLPYRDRLQVFSKYLQQLVMESLGKKFNRNGEVVNQGISVFGNKGSTDQHAYVQQLRDGIDNFFCIFIELLDTPSTNIFDDKENPKEYLSGFLQGTRSALSSENRQSITITLEKLNCFSLGALIALFERAVSFYAELVNINAYDQPGVEAGKKAAANIIEYQQKVSNLLDAGGEYSINDITSLFDNSVSESIFFILREMCFGNDNYLVKGDWSNPNSLVIQKLNS</sequence>
<feature type="chain" id="PRO_1000013997" description="Glucose-6-phosphate isomerase">
    <location>
        <begin position="1"/>
        <end position="527"/>
    </location>
</feature>
<feature type="active site" description="Proton donor" evidence="1">
    <location>
        <position position="323"/>
    </location>
</feature>
<feature type="active site" evidence="1">
    <location>
        <position position="352"/>
    </location>
</feature>
<feature type="active site" evidence="1">
    <location>
        <position position="454"/>
    </location>
</feature>
<dbReference type="EC" id="5.3.1.9" evidence="1"/>
<dbReference type="EMBL" id="CP000576">
    <property type="protein sequence ID" value="ABO17592.1"/>
    <property type="molecule type" value="Genomic_DNA"/>
</dbReference>
<dbReference type="RefSeq" id="WP_011862940.1">
    <property type="nucleotide sequence ID" value="NC_009091.1"/>
</dbReference>
<dbReference type="SMR" id="A3PCW7"/>
<dbReference type="STRING" id="167546.P9301_09691"/>
<dbReference type="KEGG" id="pmg:P9301_09691"/>
<dbReference type="eggNOG" id="COG0166">
    <property type="taxonomic scope" value="Bacteria"/>
</dbReference>
<dbReference type="HOGENOM" id="CLU_033288_0_0_3"/>
<dbReference type="OrthoDB" id="140919at2"/>
<dbReference type="UniPathway" id="UPA00109">
    <property type="reaction ID" value="UER00181"/>
</dbReference>
<dbReference type="UniPathway" id="UPA00138"/>
<dbReference type="Proteomes" id="UP000001430">
    <property type="component" value="Chromosome"/>
</dbReference>
<dbReference type="GO" id="GO:0005829">
    <property type="term" value="C:cytosol"/>
    <property type="evidence" value="ECO:0007669"/>
    <property type="project" value="TreeGrafter"/>
</dbReference>
<dbReference type="GO" id="GO:0097367">
    <property type="term" value="F:carbohydrate derivative binding"/>
    <property type="evidence" value="ECO:0007669"/>
    <property type="project" value="InterPro"/>
</dbReference>
<dbReference type="GO" id="GO:0004347">
    <property type="term" value="F:glucose-6-phosphate isomerase activity"/>
    <property type="evidence" value="ECO:0007669"/>
    <property type="project" value="UniProtKB-UniRule"/>
</dbReference>
<dbReference type="GO" id="GO:0048029">
    <property type="term" value="F:monosaccharide binding"/>
    <property type="evidence" value="ECO:0007669"/>
    <property type="project" value="TreeGrafter"/>
</dbReference>
<dbReference type="GO" id="GO:0006094">
    <property type="term" value="P:gluconeogenesis"/>
    <property type="evidence" value="ECO:0007669"/>
    <property type="project" value="UniProtKB-UniRule"/>
</dbReference>
<dbReference type="GO" id="GO:0051156">
    <property type="term" value="P:glucose 6-phosphate metabolic process"/>
    <property type="evidence" value="ECO:0007669"/>
    <property type="project" value="TreeGrafter"/>
</dbReference>
<dbReference type="GO" id="GO:0006096">
    <property type="term" value="P:glycolytic process"/>
    <property type="evidence" value="ECO:0007669"/>
    <property type="project" value="UniProtKB-UniRule"/>
</dbReference>
<dbReference type="CDD" id="cd05015">
    <property type="entry name" value="SIS_PGI_1"/>
    <property type="match status" value="1"/>
</dbReference>
<dbReference type="CDD" id="cd05016">
    <property type="entry name" value="SIS_PGI_2"/>
    <property type="match status" value="1"/>
</dbReference>
<dbReference type="FunFam" id="3.40.50.10490:FF:000021">
    <property type="entry name" value="Glucose-6-phosphate isomerase"/>
    <property type="match status" value="1"/>
</dbReference>
<dbReference type="Gene3D" id="3.40.50.10490">
    <property type="entry name" value="Glucose-6-phosphate isomerase like protein, domain 1"/>
    <property type="match status" value="3"/>
</dbReference>
<dbReference type="HAMAP" id="MF_00473">
    <property type="entry name" value="G6P_isomerase"/>
    <property type="match status" value="1"/>
</dbReference>
<dbReference type="InterPro" id="IPR001672">
    <property type="entry name" value="G6P_Isomerase"/>
</dbReference>
<dbReference type="InterPro" id="IPR018189">
    <property type="entry name" value="Phosphoglucose_isomerase_CS"/>
</dbReference>
<dbReference type="InterPro" id="IPR046348">
    <property type="entry name" value="SIS_dom_sf"/>
</dbReference>
<dbReference type="InterPro" id="IPR035476">
    <property type="entry name" value="SIS_PGI_1"/>
</dbReference>
<dbReference type="InterPro" id="IPR035482">
    <property type="entry name" value="SIS_PGI_2"/>
</dbReference>
<dbReference type="NCBIfam" id="NF010696">
    <property type="entry name" value="PRK14096.1"/>
    <property type="match status" value="1"/>
</dbReference>
<dbReference type="PANTHER" id="PTHR11469">
    <property type="entry name" value="GLUCOSE-6-PHOSPHATE ISOMERASE"/>
    <property type="match status" value="1"/>
</dbReference>
<dbReference type="PANTHER" id="PTHR11469:SF1">
    <property type="entry name" value="GLUCOSE-6-PHOSPHATE ISOMERASE"/>
    <property type="match status" value="1"/>
</dbReference>
<dbReference type="Pfam" id="PF00342">
    <property type="entry name" value="PGI"/>
    <property type="match status" value="2"/>
</dbReference>
<dbReference type="PRINTS" id="PR00662">
    <property type="entry name" value="G6PISOMERASE"/>
</dbReference>
<dbReference type="SUPFAM" id="SSF53697">
    <property type="entry name" value="SIS domain"/>
    <property type="match status" value="1"/>
</dbReference>
<dbReference type="PROSITE" id="PS00174">
    <property type="entry name" value="P_GLUCOSE_ISOMERASE_2"/>
    <property type="match status" value="1"/>
</dbReference>
<dbReference type="PROSITE" id="PS51463">
    <property type="entry name" value="P_GLUCOSE_ISOMERASE_3"/>
    <property type="match status" value="1"/>
</dbReference>
<protein>
    <recommendedName>
        <fullName evidence="1">Glucose-6-phosphate isomerase</fullName>
        <shortName evidence="1">GPI</shortName>
        <ecNumber evidence="1">5.3.1.9</ecNumber>
    </recommendedName>
    <alternativeName>
        <fullName evidence="1">Phosphoglucose isomerase</fullName>
        <shortName evidence="1">PGI</shortName>
    </alternativeName>
    <alternativeName>
        <fullName evidence="1">Phosphohexose isomerase</fullName>
        <shortName evidence="1">PHI</shortName>
    </alternativeName>
</protein>
<accession>A3PCW7</accession>
<gene>
    <name evidence="1" type="primary">pgi</name>
    <name type="ordered locus">P9301_09691</name>
</gene>
<reference key="1">
    <citation type="journal article" date="2007" name="PLoS Genet.">
        <title>Patterns and implications of gene gain and loss in the evolution of Prochlorococcus.</title>
        <authorList>
            <person name="Kettler G.C."/>
            <person name="Martiny A.C."/>
            <person name="Huang K."/>
            <person name="Zucker J."/>
            <person name="Coleman M.L."/>
            <person name="Rodrigue S."/>
            <person name="Chen F."/>
            <person name="Lapidus A."/>
            <person name="Ferriera S."/>
            <person name="Johnson J."/>
            <person name="Steglich C."/>
            <person name="Church G.M."/>
            <person name="Richardson P."/>
            <person name="Chisholm S.W."/>
        </authorList>
    </citation>
    <scope>NUCLEOTIDE SEQUENCE [LARGE SCALE GENOMIC DNA]</scope>
    <source>
        <strain>MIT 9301</strain>
    </source>
</reference>
<name>G6PI_PROM0</name>
<evidence type="ECO:0000255" key="1">
    <source>
        <dbReference type="HAMAP-Rule" id="MF_00473"/>
    </source>
</evidence>
<comment type="function">
    <text evidence="1">Catalyzes the reversible isomerization of glucose-6-phosphate to fructose-6-phosphate.</text>
</comment>
<comment type="catalytic activity">
    <reaction evidence="1">
        <text>alpha-D-glucose 6-phosphate = beta-D-fructose 6-phosphate</text>
        <dbReference type="Rhea" id="RHEA:11816"/>
        <dbReference type="ChEBI" id="CHEBI:57634"/>
        <dbReference type="ChEBI" id="CHEBI:58225"/>
        <dbReference type="EC" id="5.3.1.9"/>
    </reaction>
</comment>
<comment type="pathway">
    <text evidence="1">Carbohydrate biosynthesis; gluconeogenesis.</text>
</comment>
<comment type="pathway">
    <text evidence="1">Carbohydrate degradation; glycolysis; D-glyceraldehyde 3-phosphate and glycerone phosphate from D-glucose: step 2/4.</text>
</comment>
<comment type="subcellular location">
    <subcellularLocation>
        <location evidence="1">Cytoplasm</location>
    </subcellularLocation>
</comment>
<comment type="similarity">
    <text evidence="1">Belongs to the GPI family.</text>
</comment>
<proteinExistence type="inferred from homology"/>
<organism>
    <name type="scientific">Prochlorococcus marinus (strain MIT 9301)</name>
    <dbReference type="NCBI Taxonomy" id="167546"/>
    <lineage>
        <taxon>Bacteria</taxon>
        <taxon>Bacillati</taxon>
        <taxon>Cyanobacteriota</taxon>
        <taxon>Cyanophyceae</taxon>
        <taxon>Synechococcales</taxon>
        <taxon>Prochlorococcaceae</taxon>
        <taxon>Prochlorococcus</taxon>
    </lineage>
</organism>
<keyword id="KW-0963">Cytoplasm</keyword>
<keyword id="KW-0312">Gluconeogenesis</keyword>
<keyword id="KW-0324">Glycolysis</keyword>
<keyword id="KW-0413">Isomerase</keyword>
<keyword id="KW-1185">Reference proteome</keyword>